<dbReference type="EMBL" id="AF152318">
    <property type="protein sequence ID" value="AAD43712.1"/>
    <property type="molecule type" value="mRNA"/>
</dbReference>
<dbReference type="EMBL" id="CH471062">
    <property type="protein sequence ID" value="EAW61926.1"/>
    <property type="molecule type" value="Genomic_DNA"/>
</dbReference>
<dbReference type="EMBL" id="AF152507">
    <property type="protein sequence ID" value="AAD43768.1"/>
    <property type="molecule type" value="mRNA"/>
</dbReference>
<dbReference type="EMBL" id="BC112082">
    <property type="protein sequence ID" value="AAI12083.1"/>
    <property type="molecule type" value="mRNA"/>
</dbReference>
<dbReference type="EMBL" id="BC112084">
    <property type="protein sequence ID" value="AAI12085.1"/>
    <property type="molecule type" value="mRNA"/>
</dbReference>
<dbReference type="CCDS" id="CCDS54922.1">
    <molecule id="Q9Y5H4-1"/>
</dbReference>
<dbReference type="RefSeq" id="NP_061735.1">
    <molecule id="Q9Y5H4-1"/>
    <property type="nucleotide sequence ID" value="NM_018912.3"/>
</dbReference>
<dbReference type="RefSeq" id="NP_114382.1">
    <molecule id="Q9Y5H4-2"/>
    <property type="nucleotide sequence ID" value="NM_031993.2"/>
</dbReference>
<dbReference type="SMR" id="Q9Y5H4"/>
<dbReference type="BioGRID" id="121054">
    <property type="interactions" value="2"/>
</dbReference>
<dbReference type="FunCoup" id="Q9Y5H4">
    <property type="interactions" value="4"/>
</dbReference>
<dbReference type="STRING" id="9606.ENSP00000431083"/>
<dbReference type="GlyCosmos" id="Q9Y5H4">
    <property type="glycosylation" value="4 sites, No reported glycans"/>
</dbReference>
<dbReference type="GlyGen" id="Q9Y5H4">
    <property type="glycosylation" value="4 sites"/>
</dbReference>
<dbReference type="iPTMnet" id="Q9Y5H4"/>
<dbReference type="PhosphoSitePlus" id="Q9Y5H4"/>
<dbReference type="BioMuta" id="PCDHGA1"/>
<dbReference type="DMDM" id="37999844"/>
<dbReference type="jPOST" id="Q9Y5H4"/>
<dbReference type="MassIVE" id="Q9Y5H4"/>
<dbReference type="PaxDb" id="9606-ENSP00000431083"/>
<dbReference type="PeptideAtlas" id="Q9Y5H4"/>
<dbReference type="Antibodypedia" id="27257">
    <property type="antibodies" value="164 antibodies from 24 providers"/>
</dbReference>
<dbReference type="DNASU" id="56114"/>
<dbReference type="Ensembl" id="ENST00000378105.4">
    <molecule id="Q9Y5H4-2"/>
    <property type="protein sequence ID" value="ENSP00000367345.3"/>
    <property type="gene ID" value="ENSG00000204956.6"/>
</dbReference>
<dbReference type="Ensembl" id="ENST00000517417.3">
    <molecule id="Q9Y5H4-1"/>
    <property type="protein sequence ID" value="ENSP00000431083.1"/>
    <property type="gene ID" value="ENSG00000204956.6"/>
</dbReference>
<dbReference type="GeneID" id="56114"/>
<dbReference type="KEGG" id="hsa:56114"/>
<dbReference type="MANE-Select" id="ENST00000517417.3">
    <property type="protein sequence ID" value="ENSP00000431083.1"/>
    <property type="RefSeq nucleotide sequence ID" value="NM_018912.3"/>
    <property type="RefSeq protein sequence ID" value="NP_061735.1"/>
</dbReference>
<dbReference type="UCSC" id="uc003lji.2">
    <molecule id="Q9Y5H4-1"/>
    <property type="organism name" value="human"/>
</dbReference>
<dbReference type="AGR" id="HGNC:8696"/>
<dbReference type="CTD" id="56114"/>
<dbReference type="DisGeNET" id="56114"/>
<dbReference type="GeneCards" id="PCDHGA1"/>
<dbReference type="HGNC" id="HGNC:8696">
    <property type="gene designation" value="PCDHGA1"/>
</dbReference>
<dbReference type="HPA" id="ENSG00000204956">
    <property type="expression patterns" value="Low tissue specificity"/>
</dbReference>
<dbReference type="MalaCards" id="PCDHGA1"/>
<dbReference type="MIM" id="604968">
    <property type="type" value="gene"/>
</dbReference>
<dbReference type="MIM" id="606288">
    <property type="type" value="gene"/>
</dbReference>
<dbReference type="neXtProt" id="NX_Q9Y5H4"/>
<dbReference type="OpenTargets" id="ENSG00000204956"/>
<dbReference type="PharmGKB" id="PA33044"/>
<dbReference type="VEuPathDB" id="HostDB:ENSG00000204956"/>
<dbReference type="eggNOG" id="KOG3594">
    <property type="taxonomic scope" value="Eukaryota"/>
</dbReference>
<dbReference type="GeneTree" id="ENSGT00940000164018"/>
<dbReference type="HOGENOM" id="CLU_006480_3_0_1"/>
<dbReference type="InParanoid" id="Q9Y5H4"/>
<dbReference type="OMA" id="HKMAQIF"/>
<dbReference type="OrthoDB" id="6252479at2759"/>
<dbReference type="PAN-GO" id="Q9Y5H4">
    <property type="GO annotations" value="2 GO annotations based on evolutionary models"/>
</dbReference>
<dbReference type="PhylomeDB" id="Q9Y5H4"/>
<dbReference type="TreeFam" id="TF332299"/>
<dbReference type="PathwayCommons" id="Q9Y5H4"/>
<dbReference type="SIGNOR" id="Q9Y5H4"/>
<dbReference type="BioGRID-ORCS" id="56114">
    <property type="hits" value="26 hits in 1098 CRISPR screens"/>
</dbReference>
<dbReference type="GenomeRNAi" id="56114"/>
<dbReference type="Pharos" id="Q9Y5H4">
    <property type="development level" value="Tdark"/>
</dbReference>
<dbReference type="PRO" id="PR:Q9Y5H4"/>
<dbReference type="Proteomes" id="UP000005640">
    <property type="component" value="Chromosome 5"/>
</dbReference>
<dbReference type="RNAct" id="Q9Y5H4">
    <property type="molecule type" value="protein"/>
</dbReference>
<dbReference type="Bgee" id="ENSG00000204956">
    <property type="expression patterns" value="Expressed in stromal cell of endometrium and 88 other cell types or tissues"/>
</dbReference>
<dbReference type="GO" id="GO:0005886">
    <property type="term" value="C:plasma membrane"/>
    <property type="evidence" value="ECO:0000318"/>
    <property type="project" value="GO_Central"/>
</dbReference>
<dbReference type="GO" id="GO:0005509">
    <property type="term" value="F:calcium ion binding"/>
    <property type="evidence" value="ECO:0007669"/>
    <property type="project" value="InterPro"/>
</dbReference>
<dbReference type="GO" id="GO:0007155">
    <property type="term" value="P:cell adhesion"/>
    <property type="evidence" value="ECO:0000318"/>
    <property type="project" value="GO_Central"/>
</dbReference>
<dbReference type="GO" id="GO:0007156">
    <property type="term" value="P:homophilic cell adhesion via plasma membrane adhesion molecules"/>
    <property type="evidence" value="ECO:0007669"/>
    <property type="project" value="InterPro"/>
</dbReference>
<dbReference type="GO" id="GO:0007399">
    <property type="term" value="P:nervous system development"/>
    <property type="evidence" value="ECO:0007669"/>
    <property type="project" value="UniProtKB-ARBA"/>
</dbReference>
<dbReference type="CDD" id="cd11304">
    <property type="entry name" value="Cadherin_repeat"/>
    <property type="match status" value="6"/>
</dbReference>
<dbReference type="FunFam" id="2.60.40.60:FF:000004">
    <property type="entry name" value="Protocadherin 1 gamma 2"/>
    <property type="match status" value="1"/>
</dbReference>
<dbReference type="FunFam" id="2.60.40.60:FF:000001">
    <property type="entry name" value="Protocadherin alpha 2"/>
    <property type="match status" value="1"/>
</dbReference>
<dbReference type="FunFam" id="2.60.40.60:FF:000002">
    <property type="entry name" value="Protocadherin alpha 2"/>
    <property type="match status" value="1"/>
</dbReference>
<dbReference type="FunFam" id="2.60.40.60:FF:000006">
    <property type="entry name" value="Protocadherin alpha 2"/>
    <property type="match status" value="1"/>
</dbReference>
<dbReference type="FunFam" id="2.60.40.60:FF:000129">
    <property type="entry name" value="protocadherin alpha-C2 isoform X1"/>
    <property type="match status" value="1"/>
</dbReference>
<dbReference type="FunFam" id="2.60.40.60:FF:000018">
    <property type="entry name" value="Protocadherin gamma c3"/>
    <property type="match status" value="1"/>
</dbReference>
<dbReference type="Gene3D" id="2.60.40.60">
    <property type="entry name" value="Cadherins"/>
    <property type="match status" value="6"/>
</dbReference>
<dbReference type="InterPro" id="IPR002126">
    <property type="entry name" value="Cadherin-like_dom"/>
</dbReference>
<dbReference type="InterPro" id="IPR015919">
    <property type="entry name" value="Cadherin-like_sf"/>
</dbReference>
<dbReference type="InterPro" id="IPR032455">
    <property type="entry name" value="Cadherin_C"/>
</dbReference>
<dbReference type="InterPro" id="IPR031904">
    <property type="entry name" value="Cadherin_CBD"/>
</dbReference>
<dbReference type="InterPro" id="IPR020894">
    <property type="entry name" value="Cadherin_CS"/>
</dbReference>
<dbReference type="InterPro" id="IPR013164">
    <property type="entry name" value="Cadherin_N"/>
</dbReference>
<dbReference type="InterPro" id="IPR050174">
    <property type="entry name" value="Protocadherin/Cadherin-CA"/>
</dbReference>
<dbReference type="PANTHER" id="PTHR24028">
    <property type="entry name" value="CADHERIN-87A"/>
    <property type="match status" value="1"/>
</dbReference>
<dbReference type="PANTHER" id="PTHR24028:SF108">
    <property type="entry name" value="PROTOCADHERIN GAMMA-A1"/>
    <property type="match status" value="1"/>
</dbReference>
<dbReference type="Pfam" id="PF00028">
    <property type="entry name" value="Cadherin"/>
    <property type="match status" value="5"/>
</dbReference>
<dbReference type="Pfam" id="PF08266">
    <property type="entry name" value="Cadherin_2"/>
    <property type="match status" value="1"/>
</dbReference>
<dbReference type="Pfam" id="PF16492">
    <property type="entry name" value="Cadherin_C_2"/>
    <property type="match status" value="1"/>
</dbReference>
<dbReference type="Pfam" id="PF15974">
    <property type="entry name" value="Cadherin_tail"/>
    <property type="match status" value="1"/>
</dbReference>
<dbReference type="PRINTS" id="PR00205">
    <property type="entry name" value="CADHERIN"/>
</dbReference>
<dbReference type="SMART" id="SM00112">
    <property type="entry name" value="CA"/>
    <property type="match status" value="6"/>
</dbReference>
<dbReference type="SUPFAM" id="SSF49313">
    <property type="entry name" value="Cadherin-like"/>
    <property type="match status" value="6"/>
</dbReference>
<dbReference type="PROSITE" id="PS00232">
    <property type="entry name" value="CADHERIN_1"/>
    <property type="match status" value="5"/>
</dbReference>
<dbReference type="PROSITE" id="PS50268">
    <property type="entry name" value="CADHERIN_2"/>
    <property type="match status" value="6"/>
</dbReference>
<proteinExistence type="evidence at protein level"/>
<comment type="function">
    <text>Potential calcium-dependent cell-adhesion protein. May be involved in the establishment and maintenance of specific neuronal connections in the brain.</text>
</comment>
<comment type="subcellular location">
    <subcellularLocation>
        <location evidence="1">Cell membrane</location>
        <topology evidence="1">Single-pass type I membrane protein</topology>
    </subcellularLocation>
</comment>
<comment type="alternative products">
    <event type="alternative splicing"/>
    <isoform>
        <id>Q9Y5H4-1</id>
        <name>1</name>
        <sequence type="displayed"/>
    </isoform>
    <isoform>
        <id>Q9Y5H4-2</id>
        <name>2</name>
        <name>Short</name>
        <sequence type="described" ref="VSP_008659 VSP_008660"/>
    </isoform>
</comment>
<accession>Q9Y5H4</accession>
<accession>Q2M273</accession>
<accession>Q9Y5D6</accession>
<evidence type="ECO:0000250" key="1"/>
<evidence type="ECO:0000255" key="2"/>
<evidence type="ECO:0000255" key="3">
    <source>
        <dbReference type="PROSITE-ProRule" id="PRU00043"/>
    </source>
</evidence>
<evidence type="ECO:0000256" key="4">
    <source>
        <dbReference type="SAM" id="MobiDB-lite"/>
    </source>
</evidence>
<evidence type="ECO:0000269" key="5">
    <source>
    </source>
</evidence>
<evidence type="ECO:0000269" key="6">
    <source ref="2"/>
</evidence>
<evidence type="ECO:0000303" key="7">
    <source>
    </source>
</evidence>
<evidence type="ECO:0000303" key="8">
    <source>
    </source>
</evidence>
<name>PCDG1_HUMAN</name>
<feature type="signal peptide" evidence="2">
    <location>
        <begin position="1"/>
        <end position="28"/>
    </location>
</feature>
<feature type="chain" id="PRO_0000003948" description="Protocadherin gamma-A1">
    <location>
        <begin position="29"/>
        <end position="931"/>
    </location>
</feature>
<feature type="topological domain" description="Extracellular" evidence="2">
    <location>
        <begin position="29"/>
        <end position="692"/>
    </location>
</feature>
<feature type="transmembrane region" description="Helical" evidence="2">
    <location>
        <begin position="693"/>
        <end position="713"/>
    </location>
</feature>
<feature type="topological domain" description="Cytoplasmic" evidence="2">
    <location>
        <begin position="714"/>
        <end position="931"/>
    </location>
</feature>
<feature type="domain" description="Cadherin 1" evidence="3">
    <location>
        <begin position="29"/>
        <end position="133"/>
    </location>
</feature>
<feature type="domain" description="Cadherin 2" evidence="3">
    <location>
        <begin position="134"/>
        <end position="242"/>
    </location>
</feature>
<feature type="domain" description="Cadherin 3" evidence="3">
    <location>
        <begin position="243"/>
        <end position="347"/>
    </location>
</feature>
<feature type="domain" description="Cadherin 4" evidence="3">
    <location>
        <begin position="348"/>
        <end position="452"/>
    </location>
</feature>
<feature type="domain" description="Cadherin 5" evidence="3">
    <location>
        <begin position="453"/>
        <end position="562"/>
    </location>
</feature>
<feature type="domain" description="Cadherin 6" evidence="3">
    <location>
        <begin position="570"/>
        <end position="682"/>
    </location>
</feature>
<feature type="region of interest" description="Disordered" evidence="4">
    <location>
        <begin position="801"/>
        <end position="840"/>
    </location>
</feature>
<feature type="region of interest" description="Disordered" evidence="4">
    <location>
        <begin position="901"/>
        <end position="931"/>
    </location>
</feature>
<feature type="compositionally biased region" description="Polar residues" evidence="4">
    <location>
        <begin position="805"/>
        <end position="840"/>
    </location>
</feature>
<feature type="compositionally biased region" description="Basic residues" evidence="4">
    <location>
        <begin position="921"/>
        <end position="931"/>
    </location>
</feature>
<feature type="glycosylation site" description="N-linked (GlcNAc...) asparagine" evidence="2">
    <location>
        <position position="265"/>
    </location>
</feature>
<feature type="glycosylation site" description="N-linked (GlcNAc...) asparagine" evidence="2">
    <location>
        <position position="419"/>
    </location>
</feature>
<feature type="glycosylation site" description="N-linked (GlcNAc...) asparagine" evidence="2">
    <location>
        <position position="545"/>
    </location>
</feature>
<feature type="glycosylation site" description="N-linked (GlcNAc...) asparagine" evidence="2">
    <location>
        <position position="685"/>
    </location>
</feature>
<feature type="splice variant" id="VSP_008659" description="In isoform 2." evidence="7 8">
    <original>QAPPNTDWRFSQAQRP</original>
    <variation>VNFCDECISYLEKNNS</variation>
    <location>
        <begin position="808"/>
        <end position="823"/>
    </location>
</feature>
<feature type="splice variant" id="VSP_008660" description="In isoform 2." evidence="7 8">
    <location>
        <begin position="824"/>
        <end position="931"/>
    </location>
</feature>
<feature type="sequence variant" id="VAR_021882" description="In dbSNP:rs2472647." evidence="5 6">
    <original>V</original>
    <variation>I</variation>
    <location>
        <position position="152"/>
    </location>
</feature>
<feature type="sequence variant" id="VAR_048555" description="In dbSNP:rs17097185.">
    <original>H</original>
    <variation>Q</variation>
    <location>
        <position position="282"/>
    </location>
</feature>
<keyword id="KW-0025">Alternative splicing</keyword>
<keyword id="KW-0106">Calcium</keyword>
<keyword id="KW-0130">Cell adhesion</keyword>
<keyword id="KW-1003">Cell membrane</keyword>
<keyword id="KW-0325">Glycoprotein</keyword>
<keyword id="KW-0472">Membrane</keyword>
<keyword id="KW-1267">Proteomics identification</keyword>
<keyword id="KW-1185">Reference proteome</keyword>
<keyword id="KW-0677">Repeat</keyword>
<keyword id="KW-0732">Signal</keyword>
<keyword id="KW-0812">Transmembrane</keyword>
<keyword id="KW-1133">Transmembrane helix</keyword>
<reference key="1">
    <citation type="journal article" date="1999" name="Cell">
        <title>A striking organization of a large family of human neural cadherin-like cell adhesion genes.</title>
        <authorList>
            <person name="Wu Q."/>
            <person name="Maniatis T."/>
        </authorList>
    </citation>
    <scope>NUCLEOTIDE SEQUENCE [MRNA] (ISOFORMS 1 AND 2)</scope>
    <source>
        <tissue>Brain</tissue>
    </source>
</reference>
<reference key="2">
    <citation type="submission" date="2005-09" db="EMBL/GenBank/DDBJ databases">
        <authorList>
            <person name="Mural R.J."/>
            <person name="Istrail S."/>
            <person name="Sutton G."/>
            <person name="Florea L."/>
            <person name="Halpern A.L."/>
            <person name="Mobarry C.M."/>
            <person name="Lippert R."/>
            <person name="Walenz B."/>
            <person name="Shatkay H."/>
            <person name="Dew I."/>
            <person name="Miller J.R."/>
            <person name="Flanigan M.J."/>
            <person name="Edwards N.J."/>
            <person name="Bolanos R."/>
            <person name="Fasulo D."/>
            <person name="Halldorsson B.V."/>
            <person name="Hannenhalli S."/>
            <person name="Turner R."/>
            <person name="Yooseph S."/>
            <person name="Lu F."/>
            <person name="Nusskern D.R."/>
            <person name="Shue B.C."/>
            <person name="Zheng X.H."/>
            <person name="Zhong F."/>
            <person name="Delcher A.L."/>
            <person name="Huson D.H."/>
            <person name="Kravitz S.A."/>
            <person name="Mouchard L."/>
            <person name="Reinert K."/>
            <person name="Remington K.A."/>
            <person name="Clark A.G."/>
            <person name="Waterman M.S."/>
            <person name="Eichler E.E."/>
            <person name="Adams M.D."/>
            <person name="Hunkapiller M.W."/>
            <person name="Myers E.W."/>
            <person name="Venter J.C."/>
        </authorList>
    </citation>
    <scope>NUCLEOTIDE SEQUENCE [LARGE SCALE GENOMIC DNA]</scope>
    <scope>VARIANT ILE-152</scope>
</reference>
<reference key="3">
    <citation type="journal article" date="2004" name="Genome Res.">
        <title>The status, quality, and expansion of the NIH full-length cDNA project: the Mammalian Gene Collection (MGC).</title>
        <authorList>
            <consortium name="The MGC Project Team"/>
        </authorList>
    </citation>
    <scope>NUCLEOTIDE SEQUENCE [LARGE SCALE MRNA] (ISOFORM 2)</scope>
    <scope>VARIANT ILE-152</scope>
    <source>
        <tissue>Lung</tissue>
    </source>
</reference>
<sequence length="931" mass="101226">MKIQKKLTGCSRLMLLCLSLELLLEAGAGNIHYSVPEETDKGSFVGNIAKDLGLQPQELADGGVRIVSRGRMPLFALNPRSGSLITARRIDREELCAQSMPCLVSFNILVEDKMKLFPVEVEIIDINDNTPQFQLEELEFKMNEITTPGTRVSLPFGQDLDVGMNSLQSYQLSSNPHFSLDVQQGADGPQHPEMVLQSPLDREEEAVHHLILTASDGGEPVRSGTLRIYIQVVDANDNPPAFTQAQYHINVPENVPLGTQLLMVNATDPDEGANGEVTYSFHNVDHRVAQIFRLDSYTGEISNKEPLDFEEYKMYSMEVQAQDGAGLMAKVKVLIKVLDVNDNAPEVTITSVTTAVPENFPPGTIIALISVHDQDSGDNGYTTCFIPGNLPFKLEKLVDNYYRLVTERTLDRELISGYNITITAIDQGTPALSTETHISLLVTDINDNSPVFHQDSYSAYIPENNPRGASIFSVRAHDLDSNENAQITYSLIEDTIQGAPLSAYLSINSDTGVLYALRSFDYEQFRDMQLKVMARDSGDPPLSSNVSLSLFLLDQNDNAPEILYPALPTDGSTGVELAPLSAEPGYLVTKVVAVDRDSGQNAWLSYRLLKASEPGLFSVGLHTGEVRTARALLDRDALKQSLVVAVQDHGQPPLSATVTLTVAVADRISDILADLGSLEPSAKPNDSDLTLYLVVAAAAVSCVFLAFVIVLLAHRLRRWHKSRLLQASGGGLASMPGSHFVGVDGVRAFLQTYSHEVSLTADSRKSHLIFPQPNYADTLISQESCEKKGFLSAPQSLLEDKKEPFSQQAPPNTDWRFSQAQRPGTSGSQNGDDTGTWPNNQFDTEMLQAMILASASEAADGSSTLGGGAGTMGLSARYGPQFTLQHVPDYRQNVYIPGSNATLTNAAGKRDGKAPAGGNGNKKKSGKKEKK</sequence>
<organism>
    <name type="scientific">Homo sapiens</name>
    <name type="common">Human</name>
    <dbReference type="NCBI Taxonomy" id="9606"/>
    <lineage>
        <taxon>Eukaryota</taxon>
        <taxon>Metazoa</taxon>
        <taxon>Chordata</taxon>
        <taxon>Craniata</taxon>
        <taxon>Vertebrata</taxon>
        <taxon>Euteleostomi</taxon>
        <taxon>Mammalia</taxon>
        <taxon>Eutheria</taxon>
        <taxon>Euarchontoglires</taxon>
        <taxon>Primates</taxon>
        <taxon>Haplorrhini</taxon>
        <taxon>Catarrhini</taxon>
        <taxon>Hominidae</taxon>
        <taxon>Homo</taxon>
    </lineage>
</organism>
<protein>
    <recommendedName>
        <fullName>Protocadherin gamma-A1</fullName>
        <shortName>PCDH-gamma-A1</shortName>
    </recommendedName>
</protein>
<gene>
    <name type="primary">PCDHGA1</name>
</gene>